<name>CBP1_CANAL</name>
<organism>
    <name type="scientific">Candida albicans (strain SC5314 / ATCC MYA-2876)</name>
    <name type="common">Yeast</name>
    <dbReference type="NCBI Taxonomy" id="237561"/>
    <lineage>
        <taxon>Eukaryota</taxon>
        <taxon>Fungi</taxon>
        <taxon>Dikarya</taxon>
        <taxon>Ascomycota</taxon>
        <taxon>Saccharomycotina</taxon>
        <taxon>Pichiomycetes</taxon>
        <taxon>Debaryomycetaceae</taxon>
        <taxon>Candida/Lodderomyces clade</taxon>
        <taxon>Candida</taxon>
    </lineage>
</organism>
<keyword id="KW-0903">Direct protein sequencing</keyword>
<keyword id="KW-0446">Lipid-binding</keyword>
<keyword id="KW-1185">Reference proteome</keyword>
<keyword id="KW-0754">Steroid-binding</keyword>
<feature type="chain" id="PRO_0000089377" description="Corticosteroid-binding protein">
    <location>
        <begin position="1"/>
        <end position="489"/>
    </location>
</feature>
<gene>
    <name type="primary">CBP1</name>
    <name type="ordered locus">CAALFM_CR09270CA</name>
    <name type="ORF">CaO19.7323</name>
</gene>
<reference key="1">
    <citation type="journal article" date="1993" name="Proc. Natl. Acad. Sci. U.S.A.">
        <title>Cloning and expression of the gene from Candida albicans that encodes a high-affinity corticosteroid-binding protein.</title>
        <authorList>
            <person name="Malloy P.J."/>
            <person name="Zhao X."/>
            <person name="Madani N.D."/>
            <person name="Feldman D."/>
        </authorList>
    </citation>
    <scope>NUCLEOTIDE SEQUENCE [GENOMIC DNA]</scope>
    <scope>PROTEIN SEQUENCE OF 53-63; 373-380 AND 403-414</scope>
    <source>
        <strain>STN-1</strain>
    </source>
</reference>
<reference key="2">
    <citation type="journal article" date="2004" name="Proc. Natl. Acad. Sci. U.S.A.">
        <title>The diploid genome sequence of Candida albicans.</title>
        <authorList>
            <person name="Jones T."/>
            <person name="Federspiel N.A."/>
            <person name="Chibana H."/>
            <person name="Dungan J."/>
            <person name="Kalman S."/>
            <person name="Magee B.B."/>
            <person name="Newport G."/>
            <person name="Thorstenson Y.R."/>
            <person name="Agabian N."/>
            <person name="Magee P.T."/>
            <person name="Davis R.W."/>
            <person name="Scherer S."/>
        </authorList>
    </citation>
    <scope>NUCLEOTIDE SEQUENCE [LARGE SCALE GENOMIC DNA]</scope>
    <source>
        <strain>SC5314 / ATCC MYA-2876</strain>
    </source>
</reference>
<reference key="3">
    <citation type="journal article" date="2007" name="Genome Biol.">
        <title>Assembly of the Candida albicans genome into sixteen supercontigs aligned on the eight chromosomes.</title>
        <authorList>
            <person name="van het Hoog M."/>
            <person name="Rast T.J."/>
            <person name="Martchenko M."/>
            <person name="Grindle S."/>
            <person name="Dignard D."/>
            <person name="Hogues H."/>
            <person name="Cuomo C."/>
            <person name="Berriman M."/>
            <person name="Scherer S."/>
            <person name="Magee B.B."/>
            <person name="Whiteway M."/>
            <person name="Chibana H."/>
            <person name="Nantel A."/>
            <person name="Magee P.T."/>
        </authorList>
    </citation>
    <scope>GENOME REANNOTATION</scope>
    <source>
        <strain>SC5314 / ATCC MYA-2876</strain>
    </source>
</reference>
<reference key="4">
    <citation type="journal article" date="2013" name="Genome Biol.">
        <title>Assembly of a phased diploid Candida albicans genome facilitates allele-specific measurements and provides a simple model for repeat and indel structure.</title>
        <authorList>
            <person name="Muzzey D."/>
            <person name="Schwartz K."/>
            <person name="Weissman J.S."/>
            <person name="Sherlock G."/>
        </authorList>
    </citation>
    <scope>NUCLEOTIDE SEQUENCE [LARGE SCALE GENOMIC DNA]</scope>
    <scope>GENOME REANNOTATION</scope>
    <source>
        <strain>SC5314 / ATCC MYA-2876</strain>
    </source>
</reference>
<comment type="function">
    <text>May be a flavoprotein with enzymatic activity.</text>
</comment>
<comment type="similarity">
    <text evidence="1">To yeast FMS1.</text>
</comment>
<dbReference type="EMBL" id="L08824">
    <property type="protein sequence ID" value="AAA34328.2"/>
    <property type="molecule type" value="Genomic_DNA"/>
</dbReference>
<dbReference type="EMBL" id="CP017630">
    <property type="protein sequence ID" value="AOW31590.1"/>
    <property type="molecule type" value="Genomic_DNA"/>
</dbReference>
<dbReference type="PIR" id="A47259">
    <property type="entry name" value="A47259"/>
</dbReference>
<dbReference type="RefSeq" id="XP_716457.1">
    <property type="nucleotide sequence ID" value="XM_711364.1"/>
</dbReference>
<dbReference type="SMR" id="P31225"/>
<dbReference type="STRING" id="237561.P31225"/>
<dbReference type="EnsemblFungi" id="CR_09270C_A-T">
    <property type="protein sequence ID" value="CR_09270C_A-T-p1"/>
    <property type="gene ID" value="CR_09270C_A"/>
</dbReference>
<dbReference type="GeneID" id="3641920"/>
<dbReference type="KEGG" id="cal:CAALFM_CR09270CA"/>
<dbReference type="CGD" id="CAL0000184027">
    <property type="gene designation" value="CBP1"/>
</dbReference>
<dbReference type="VEuPathDB" id="FungiDB:CR_09270C_A"/>
<dbReference type="eggNOG" id="KOG0029">
    <property type="taxonomic scope" value="Eukaryota"/>
</dbReference>
<dbReference type="HOGENOM" id="CLU_004498_10_1_1"/>
<dbReference type="InParanoid" id="P31225"/>
<dbReference type="OMA" id="EFFDNYQ"/>
<dbReference type="OrthoDB" id="5046242at2759"/>
<dbReference type="Proteomes" id="UP000000559">
    <property type="component" value="Chromosome R"/>
</dbReference>
<dbReference type="GO" id="GO:0062040">
    <property type="term" value="C:fungal biofilm matrix"/>
    <property type="evidence" value="ECO:0000314"/>
    <property type="project" value="CGD"/>
</dbReference>
<dbReference type="GO" id="GO:0016491">
    <property type="term" value="F:oxidoreductase activity"/>
    <property type="evidence" value="ECO:0000318"/>
    <property type="project" value="GO_Central"/>
</dbReference>
<dbReference type="GO" id="GO:0046592">
    <property type="term" value="F:polyamine oxidase activity"/>
    <property type="evidence" value="ECO:0007669"/>
    <property type="project" value="EnsemblFungi"/>
</dbReference>
<dbReference type="GO" id="GO:0005496">
    <property type="term" value="F:steroid binding"/>
    <property type="evidence" value="ECO:0000314"/>
    <property type="project" value="CGD"/>
</dbReference>
<dbReference type="GO" id="GO:0015940">
    <property type="term" value="P:pantothenate biosynthetic process"/>
    <property type="evidence" value="ECO:0007669"/>
    <property type="project" value="EnsemblFungi"/>
</dbReference>
<dbReference type="GO" id="GO:0046208">
    <property type="term" value="P:spermine catabolic process"/>
    <property type="evidence" value="ECO:0007669"/>
    <property type="project" value="EnsemblFungi"/>
</dbReference>
<dbReference type="Gene3D" id="3.90.660.10">
    <property type="match status" value="1"/>
</dbReference>
<dbReference type="Gene3D" id="3.50.50.60">
    <property type="entry name" value="FAD/NAD(P)-binding domain"/>
    <property type="match status" value="1"/>
</dbReference>
<dbReference type="InterPro" id="IPR002937">
    <property type="entry name" value="Amino_oxidase"/>
</dbReference>
<dbReference type="InterPro" id="IPR036188">
    <property type="entry name" value="FAD/NAD-bd_sf"/>
</dbReference>
<dbReference type="InterPro" id="IPR050281">
    <property type="entry name" value="Flavin_monoamine_oxidase"/>
</dbReference>
<dbReference type="PANTHER" id="PTHR10742">
    <property type="entry name" value="FLAVIN MONOAMINE OXIDASE"/>
    <property type="match status" value="1"/>
</dbReference>
<dbReference type="PANTHER" id="PTHR10742:SF410">
    <property type="entry name" value="LYSINE-SPECIFIC HISTONE DEMETHYLASE 2"/>
    <property type="match status" value="1"/>
</dbReference>
<dbReference type="Pfam" id="PF01593">
    <property type="entry name" value="Amino_oxidase"/>
    <property type="match status" value="1"/>
</dbReference>
<dbReference type="SUPFAM" id="SSF54373">
    <property type="entry name" value="FAD-linked reductases, C-terminal domain"/>
    <property type="match status" value="1"/>
</dbReference>
<dbReference type="SUPFAM" id="SSF51905">
    <property type="entry name" value="FAD/NAD(P)-binding domain"/>
    <property type="match status" value="1"/>
</dbReference>
<accession>P31225</accession>
<accession>A0A1D8PTY1</accession>
<accession>Q5A3Y6</accession>
<sequence>MSRTKSTKVLIIGAGVSGLKAAETILSKSFLTGDDVLVVEAQNRIGGRLKTTDTSQSKLGINYDLGASWFHDSLNNIVLNHMINDGLLDDEKDVYFDDKDLKTFSSTGEVPIVDKKLNRVLEDIEKYIQLYFNRNLGVPDLSLRDIVAQYFEKYNRLITEEQREYCGRMMRYLEFWFGISWDRISGKYAVTTHQGRNLLNKKGYGYLVESLAKRIPESSLLLEEPVNKIIRNNKDAGKRVLVETINGLQIFCDYLIVTVPQSILSLEESSPYSIKWEPKLPQRLVESINSIHFGALGKVIFEFDRIFWDNSKDRFQIIADHTDGDLSRELTELPKPFTYPLFAVNFGRVHNGKASLVILTQAPLTNYLETHPDQAWQYYQPMLQKLSINDEPIPDPINTIVTDWTTNPYIRGSYSTMYTNDDPSDLIISLSGDFEDLGISEPYIKFAGEHTTSEGTGCVHGAYMSGIYAADCILENIFRNDVTGYTIIG</sequence>
<evidence type="ECO:0000305" key="1"/>
<protein>
    <recommendedName>
        <fullName>Corticosteroid-binding protein</fullName>
    </recommendedName>
</protein>
<proteinExistence type="evidence at protein level"/>